<sequence length="91" mass="10899">MSRTIFCTYLQRDAEGQDFQLYPGELGKRIYNEISKDAWAQWQHKQTMLINEKKLNMMNAEHRKLLEQEMVSFLFEGKDVHIEGYTPEDKK</sequence>
<keyword id="KW-0408">Iron</keyword>
<name>FETP_SALDC</name>
<dbReference type="EMBL" id="CP001144">
    <property type="protein sequence ID" value="ACH77302.1"/>
    <property type="molecule type" value="Genomic_DNA"/>
</dbReference>
<dbReference type="RefSeq" id="WP_000091706.1">
    <property type="nucleotide sequence ID" value="NC_011205.1"/>
</dbReference>
<dbReference type="SMR" id="B5FUX4"/>
<dbReference type="KEGG" id="sed:SeD_A3454"/>
<dbReference type="HOGENOM" id="CLU_170994_0_0_6"/>
<dbReference type="Proteomes" id="UP000008322">
    <property type="component" value="Chromosome"/>
</dbReference>
<dbReference type="GO" id="GO:0005829">
    <property type="term" value="C:cytosol"/>
    <property type="evidence" value="ECO:0007669"/>
    <property type="project" value="TreeGrafter"/>
</dbReference>
<dbReference type="GO" id="GO:0005506">
    <property type="term" value="F:iron ion binding"/>
    <property type="evidence" value="ECO:0007669"/>
    <property type="project" value="UniProtKB-UniRule"/>
</dbReference>
<dbReference type="GO" id="GO:0034599">
    <property type="term" value="P:cellular response to oxidative stress"/>
    <property type="evidence" value="ECO:0007669"/>
    <property type="project" value="TreeGrafter"/>
</dbReference>
<dbReference type="FunFam" id="1.10.3880.10:FF:000001">
    <property type="entry name" value="Probable Fe(2+)-trafficking protein"/>
    <property type="match status" value="1"/>
</dbReference>
<dbReference type="Gene3D" id="1.10.3880.10">
    <property type="entry name" value="Fe(II) trafficking protein YggX"/>
    <property type="match status" value="1"/>
</dbReference>
<dbReference type="HAMAP" id="MF_00686">
    <property type="entry name" value="Fe_traffic_YggX"/>
    <property type="match status" value="1"/>
</dbReference>
<dbReference type="InterPro" id="IPR007457">
    <property type="entry name" value="Fe_traffick_prot_YggX"/>
</dbReference>
<dbReference type="InterPro" id="IPR036766">
    <property type="entry name" value="Fe_traffick_prot_YggX_sf"/>
</dbReference>
<dbReference type="NCBIfam" id="NF003817">
    <property type="entry name" value="PRK05408.1"/>
    <property type="match status" value="1"/>
</dbReference>
<dbReference type="PANTHER" id="PTHR36965">
    <property type="entry name" value="FE(2+)-TRAFFICKING PROTEIN-RELATED"/>
    <property type="match status" value="1"/>
</dbReference>
<dbReference type="PANTHER" id="PTHR36965:SF1">
    <property type="entry name" value="FE(2+)-TRAFFICKING PROTEIN-RELATED"/>
    <property type="match status" value="1"/>
</dbReference>
<dbReference type="Pfam" id="PF04362">
    <property type="entry name" value="Iron_traffic"/>
    <property type="match status" value="1"/>
</dbReference>
<dbReference type="PIRSF" id="PIRSF029827">
    <property type="entry name" value="Fe_traffic_YggX"/>
    <property type="match status" value="1"/>
</dbReference>
<dbReference type="SUPFAM" id="SSF111148">
    <property type="entry name" value="YggX-like"/>
    <property type="match status" value="1"/>
</dbReference>
<proteinExistence type="inferred from homology"/>
<evidence type="ECO:0000255" key="1">
    <source>
        <dbReference type="HAMAP-Rule" id="MF_00686"/>
    </source>
</evidence>
<gene>
    <name evidence="1" type="primary">yggX</name>
    <name type="ordered locus">SeD_A3454</name>
</gene>
<organism>
    <name type="scientific">Salmonella dublin (strain CT_02021853)</name>
    <dbReference type="NCBI Taxonomy" id="439851"/>
    <lineage>
        <taxon>Bacteria</taxon>
        <taxon>Pseudomonadati</taxon>
        <taxon>Pseudomonadota</taxon>
        <taxon>Gammaproteobacteria</taxon>
        <taxon>Enterobacterales</taxon>
        <taxon>Enterobacteriaceae</taxon>
        <taxon>Salmonella</taxon>
    </lineage>
</organism>
<comment type="function">
    <text evidence="1">Could be a mediator in iron transactions between iron acquisition and iron-requiring processes, such as synthesis and/or repair of Fe-S clusters in biosynthetic enzymes.</text>
</comment>
<comment type="subunit">
    <text evidence="1">Monomer.</text>
</comment>
<comment type="similarity">
    <text evidence="1">Belongs to the Fe(2+)-trafficking protein family.</text>
</comment>
<accession>B5FUX4</accession>
<reference key="1">
    <citation type="journal article" date="2011" name="J. Bacteriol.">
        <title>Comparative genomics of 28 Salmonella enterica isolates: evidence for CRISPR-mediated adaptive sublineage evolution.</title>
        <authorList>
            <person name="Fricke W.F."/>
            <person name="Mammel M.K."/>
            <person name="McDermott P.F."/>
            <person name="Tartera C."/>
            <person name="White D.G."/>
            <person name="Leclerc J.E."/>
            <person name="Ravel J."/>
            <person name="Cebula T.A."/>
        </authorList>
    </citation>
    <scope>NUCLEOTIDE SEQUENCE [LARGE SCALE GENOMIC DNA]</scope>
    <source>
        <strain>CT_02021853</strain>
    </source>
</reference>
<protein>
    <recommendedName>
        <fullName evidence="1">Probable Fe(2+)-trafficking protein</fullName>
    </recommendedName>
</protein>
<feature type="chain" id="PRO_1000131858" description="Probable Fe(2+)-trafficking protein">
    <location>
        <begin position="1"/>
        <end position="91"/>
    </location>
</feature>